<dbReference type="EMBL" id="AJ248284">
    <property type="protein sequence ID" value="CAB49404.1"/>
    <property type="molecule type" value="Genomic_DNA"/>
</dbReference>
<dbReference type="EMBL" id="HE613800">
    <property type="protein sequence ID" value="CCE69865.1"/>
    <property type="molecule type" value="Genomic_DNA"/>
</dbReference>
<dbReference type="PIR" id="E75165">
    <property type="entry name" value="E75165"/>
</dbReference>
<dbReference type="RefSeq" id="WP_010867606.1">
    <property type="nucleotide sequence ID" value="NC_000868.1"/>
</dbReference>
<dbReference type="SMR" id="Q9V1E5"/>
<dbReference type="STRING" id="272844.PAB0322"/>
<dbReference type="KEGG" id="pab:PAB0322"/>
<dbReference type="PATRIC" id="fig|272844.11.peg.509"/>
<dbReference type="eggNOG" id="arCOG01580">
    <property type="taxonomic scope" value="Archaea"/>
</dbReference>
<dbReference type="HOGENOM" id="CLU_091233_5_4_2"/>
<dbReference type="OrthoDB" id="6995at2157"/>
<dbReference type="PhylomeDB" id="Q9V1E5"/>
<dbReference type="Proteomes" id="UP000000810">
    <property type="component" value="Chromosome"/>
</dbReference>
<dbReference type="Proteomes" id="UP000009139">
    <property type="component" value="Chromosome"/>
</dbReference>
<dbReference type="GO" id="GO:0005829">
    <property type="term" value="C:cytosol"/>
    <property type="evidence" value="ECO:0007669"/>
    <property type="project" value="TreeGrafter"/>
</dbReference>
<dbReference type="GO" id="GO:0043565">
    <property type="term" value="F:sequence-specific DNA binding"/>
    <property type="evidence" value="ECO:0007669"/>
    <property type="project" value="InterPro"/>
</dbReference>
<dbReference type="GO" id="GO:0043200">
    <property type="term" value="P:response to amino acid"/>
    <property type="evidence" value="ECO:0007669"/>
    <property type="project" value="TreeGrafter"/>
</dbReference>
<dbReference type="CDD" id="cd00090">
    <property type="entry name" value="HTH_ARSR"/>
    <property type="match status" value="1"/>
</dbReference>
<dbReference type="Gene3D" id="3.30.70.920">
    <property type="match status" value="1"/>
</dbReference>
<dbReference type="Gene3D" id="1.10.10.10">
    <property type="entry name" value="Winged helix-like DNA-binding domain superfamily/Winged helix DNA-binding domain"/>
    <property type="match status" value="1"/>
</dbReference>
<dbReference type="InterPro" id="IPR011991">
    <property type="entry name" value="ArsR-like_HTH"/>
</dbReference>
<dbReference type="InterPro" id="IPR000485">
    <property type="entry name" value="AsnC-type_HTH_dom"/>
</dbReference>
<dbReference type="InterPro" id="IPR011008">
    <property type="entry name" value="Dimeric_a/b-barrel"/>
</dbReference>
<dbReference type="InterPro" id="IPR019888">
    <property type="entry name" value="Tscrpt_reg_AsnC-like"/>
</dbReference>
<dbReference type="InterPro" id="IPR019887">
    <property type="entry name" value="Tscrpt_reg_AsnC/Lrp_C"/>
</dbReference>
<dbReference type="InterPro" id="IPR036388">
    <property type="entry name" value="WH-like_DNA-bd_sf"/>
</dbReference>
<dbReference type="InterPro" id="IPR036390">
    <property type="entry name" value="WH_DNA-bd_sf"/>
</dbReference>
<dbReference type="PANTHER" id="PTHR30154">
    <property type="entry name" value="LEUCINE-RESPONSIVE REGULATORY PROTEIN"/>
    <property type="match status" value="1"/>
</dbReference>
<dbReference type="PANTHER" id="PTHR30154:SF34">
    <property type="entry name" value="TRANSCRIPTIONAL REGULATOR AZLB"/>
    <property type="match status" value="1"/>
</dbReference>
<dbReference type="Pfam" id="PF01037">
    <property type="entry name" value="AsnC_trans_reg"/>
    <property type="match status" value="1"/>
</dbReference>
<dbReference type="Pfam" id="PF13412">
    <property type="entry name" value="HTH_24"/>
    <property type="match status" value="1"/>
</dbReference>
<dbReference type="PRINTS" id="PR00033">
    <property type="entry name" value="HTHASNC"/>
</dbReference>
<dbReference type="SMART" id="SM00344">
    <property type="entry name" value="HTH_ASNC"/>
    <property type="match status" value="1"/>
</dbReference>
<dbReference type="SUPFAM" id="SSF54909">
    <property type="entry name" value="Dimeric alpha+beta barrel"/>
    <property type="match status" value="1"/>
</dbReference>
<dbReference type="SUPFAM" id="SSF46785">
    <property type="entry name" value="Winged helix' DNA-binding domain"/>
    <property type="match status" value="1"/>
</dbReference>
<dbReference type="PROSITE" id="PS50956">
    <property type="entry name" value="HTH_ASNC_2"/>
    <property type="match status" value="1"/>
</dbReference>
<organism>
    <name type="scientific">Pyrococcus abyssi (strain GE5 / Orsay)</name>
    <dbReference type="NCBI Taxonomy" id="272844"/>
    <lineage>
        <taxon>Archaea</taxon>
        <taxon>Methanobacteriati</taxon>
        <taxon>Methanobacteriota</taxon>
        <taxon>Thermococci</taxon>
        <taxon>Thermococcales</taxon>
        <taxon>Thermococcaceae</taxon>
        <taxon>Pyrococcus</taxon>
    </lineage>
</organism>
<name>REG8_PYRAB</name>
<proteinExistence type="predicted"/>
<keyword id="KW-0238">DNA-binding</keyword>
<keyword id="KW-0804">Transcription</keyword>
<keyword id="KW-0805">Transcription regulation</keyword>
<accession>Q9V1E5</accession>
<accession>G8ZGI6</accession>
<evidence type="ECO:0000255" key="1">
    <source>
        <dbReference type="PROSITE-ProRule" id="PRU00319"/>
    </source>
</evidence>
<feature type="chain" id="PRO_0000111773" description="Uncharacterized HTH-type transcriptional regulator PYRAB04820">
    <location>
        <begin position="1"/>
        <end position="147"/>
    </location>
</feature>
<feature type="domain" description="HTH asnC-type" evidence="1">
    <location>
        <begin position="2"/>
        <end position="63"/>
    </location>
</feature>
<feature type="DNA-binding region" description="H-T-H motif" evidence="1">
    <location>
        <begin position="21"/>
        <end position="40"/>
    </location>
</feature>
<sequence>MLDELDKKIIGILMKDSRISYREIAKELNVAVGTIYNRIKKLEESGVIQGFTLKLNYENIGYDLTAIMGIKAQGKKIREIERIIAKDKRVMCVYDVTGEYDIIVIAKFKNREDMNRFVKGVLSIDGVEKTNTHVVLEVVKEDFRLEP</sequence>
<reference key="1">
    <citation type="journal article" date="2003" name="Mol. Microbiol.">
        <title>An integrated analysis of the genome of the hyperthermophilic archaeon Pyrococcus abyssi.</title>
        <authorList>
            <person name="Cohen G.N."/>
            <person name="Barbe V."/>
            <person name="Flament D."/>
            <person name="Galperin M."/>
            <person name="Heilig R."/>
            <person name="Lecompte O."/>
            <person name="Poch O."/>
            <person name="Prieur D."/>
            <person name="Querellou J."/>
            <person name="Ripp R."/>
            <person name="Thierry J.-C."/>
            <person name="Van der Oost J."/>
            <person name="Weissenbach J."/>
            <person name="Zivanovic Y."/>
            <person name="Forterre P."/>
        </authorList>
    </citation>
    <scope>NUCLEOTIDE SEQUENCE [LARGE SCALE GENOMIC DNA]</scope>
    <source>
        <strain>GE5 / Orsay</strain>
    </source>
</reference>
<reference key="2">
    <citation type="journal article" date="2012" name="Curr. Microbiol.">
        <title>Re-annotation of two hyperthermophilic archaea Pyrococcus abyssi GE5 and Pyrococcus furiosus DSM 3638.</title>
        <authorList>
            <person name="Gao J."/>
            <person name="Wang J."/>
        </authorList>
    </citation>
    <scope>GENOME REANNOTATION</scope>
    <source>
        <strain>GE5 / Orsay</strain>
    </source>
</reference>
<protein>
    <recommendedName>
        <fullName>Uncharacterized HTH-type transcriptional regulator PYRAB04820</fullName>
    </recommendedName>
</protein>
<gene>
    <name type="ordered locus">PYRAB04820</name>
    <name type="ORF">PAB0322</name>
</gene>